<feature type="chain" id="PRO_0000318193" description="cAMP-responsive element-binding protein-like 2">
    <location>
        <begin position="1"/>
        <end position="123"/>
    </location>
</feature>
<feature type="domain" description="bZIP">
    <location>
        <begin position="23"/>
        <end position="86"/>
    </location>
</feature>
<feature type="region of interest" description="Disordered" evidence="2">
    <location>
        <begin position="1"/>
        <end position="24"/>
    </location>
</feature>
<feature type="region of interest" description="Basic motif" evidence="1">
    <location>
        <begin position="29"/>
        <end position="60"/>
    </location>
</feature>
<feature type="region of interest" description="Leucine-zipper" evidence="1">
    <location>
        <begin position="62"/>
        <end position="69"/>
    </location>
</feature>
<feature type="region of interest" description="Disordered" evidence="2">
    <location>
        <begin position="92"/>
        <end position="123"/>
    </location>
</feature>
<feature type="compositionally biased region" description="Basic residues" evidence="2">
    <location>
        <begin position="10"/>
        <end position="21"/>
    </location>
</feature>
<feature type="compositionally biased region" description="Polar residues" evidence="2">
    <location>
        <begin position="114"/>
        <end position="123"/>
    </location>
</feature>
<feature type="sequence conflict" description="In Ref. 1; BAC32383." evidence="4" ref="1">
    <original>N</original>
    <variation>S</variation>
    <location>
        <position position="103"/>
    </location>
</feature>
<feature type="sequence conflict" description="In Ref. 1; BAC32383." evidence="4" ref="1">
    <original>N</original>
    <variation>D</variation>
    <location>
        <position position="116"/>
    </location>
</feature>
<evidence type="ECO:0000250" key="1"/>
<evidence type="ECO:0000256" key="2">
    <source>
        <dbReference type="SAM" id="MobiDB-lite"/>
    </source>
</evidence>
<evidence type="ECO:0000269" key="3">
    <source>
    </source>
</evidence>
<evidence type="ECO:0000305" key="4"/>
<keyword id="KW-0010">Activator</keyword>
<keyword id="KW-0221">Differentiation</keyword>
<keyword id="KW-0238">DNA-binding</keyword>
<keyword id="KW-0539">Nucleus</keyword>
<keyword id="KW-0597">Phosphoprotein</keyword>
<keyword id="KW-1185">Reference proteome</keyword>
<keyword id="KW-0804">Transcription</keyword>
<keyword id="KW-0805">Transcription regulation</keyword>
<dbReference type="EMBL" id="AK045467">
    <property type="protein sequence ID" value="BAC32383.1"/>
    <property type="molecule type" value="mRNA"/>
</dbReference>
<dbReference type="EMBL" id="BC109358">
    <property type="protein sequence ID" value="AAI09359.1"/>
    <property type="molecule type" value="mRNA"/>
</dbReference>
<dbReference type="EMBL" id="BC109359">
    <property type="protein sequence ID" value="AAI09360.1"/>
    <property type="molecule type" value="mRNA"/>
</dbReference>
<dbReference type="CCDS" id="CCDS20640.1"/>
<dbReference type="RefSeq" id="NP_808355.1">
    <property type="nucleotide sequence ID" value="NM_177687.3"/>
</dbReference>
<dbReference type="RefSeq" id="XP_011239631.1">
    <property type="nucleotide sequence ID" value="XM_011241329.2"/>
</dbReference>
<dbReference type="SMR" id="Q32M00"/>
<dbReference type="FunCoup" id="Q32M00">
    <property type="interactions" value="1719"/>
</dbReference>
<dbReference type="IntAct" id="Q32M00">
    <property type="interactions" value="1"/>
</dbReference>
<dbReference type="STRING" id="10090.ENSMUSP00000035304"/>
<dbReference type="PaxDb" id="10090-ENSMUSP00000035304"/>
<dbReference type="DNASU" id="232430"/>
<dbReference type="GeneID" id="232430"/>
<dbReference type="KEGG" id="mmu:232430"/>
<dbReference type="UCSC" id="uc009ekt.1">
    <property type="organism name" value="mouse"/>
</dbReference>
<dbReference type="AGR" id="MGI:1889385"/>
<dbReference type="CTD" id="1389"/>
<dbReference type="MGI" id="MGI:1889385">
    <property type="gene designation" value="Crebl2"/>
</dbReference>
<dbReference type="eggNOG" id="KOG4515">
    <property type="taxonomic scope" value="Eukaryota"/>
</dbReference>
<dbReference type="InParanoid" id="Q32M00"/>
<dbReference type="OrthoDB" id="5984119at2759"/>
<dbReference type="PhylomeDB" id="Q32M00"/>
<dbReference type="TreeFam" id="TF323305"/>
<dbReference type="BioGRID-ORCS" id="232430">
    <property type="hits" value="2 hits in 77 CRISPR screens"/>
</dbReference>
<dbReference type="ChiTaRS" id="Crebl2">
    <property type="organism name" value="mouse"/>
</dbReference>
<dbReference type="PRO" id="PR:Q32M00"/>
<dbReference type="Proteomes" id="UP000000589">
    <property type="component" value="Unplaced"/>
</dbReference>
<dbReference type="RNAct" id="Q32M00">
    <property type="molecule type" value="protein"/>
</dbReference>
<dbReference type="GO" id="GO:0005634">
    <property type="term" value="C:nucleus"/>
    <property type="evidence" value="ECO:0000314"/>
    <property type="project" value="UniProtKB"/>
</dbReference>
<dbReference type="GO" id="GO:0003677">
    <property type="term" value="F:DNA binding"/>
    <property type="evidence" value="ECO:0007669"/>
    <property type="project" value="UniProtKB-KW"/>
</dbReference>
<dbReference type="GO" id="GO:0003700">
    <property type="term" value="F:DNA-binding transcription factor activity"/>
    <property type="evidence" value="ECO:0007669"/>
    <property type="project" value="InterPro"/>
</dbReference>
<dbReference type="GO" id="GO:0030154">
    <property type="term" value="P:cell differentiation"/>
    <property type="evidence" value="ECO:0007669"/>
    <property type="project" value="UniProtKB-KW"/>
</dbReference>
<dbReference type="GO" id="GO:0046326">
    <property type="term" value="P:positive regulation of D-glucose import"/>
    <property type="evidence" value="ECO:0000315"/>
    <property type="project" value="UniProtKB"/>
</dbReference>
<dbReference type="GO" id="GO:0045893">
    <property type="term" value="P:positive regulation of DNA-templated transcription"/>
    <property type="evidence" value="ECO:0000315"/>
    <property type="project" value="UniProtKB"/>
</dbReference>
<dbReference type="GO" id="GO:0045600">
    <property type="term" value="P:positive regulation of fat cell differentiation"/>
    <property type="evidence" value="ECO:0000315"/>
    <property type="project" value="UniProtKB"/>
</dbReference>
<dbReference type="GO" id="GO:0046889">
    <property type="term" value="P:positive regulation of lipid biosynthetic process"/>
    <property type="evidence" value="ECO:0000315"/>
    <property type="project" value="UniProtKB"/>
</dbReference>
<dbReference type="GO" id="GO:0033138">
    <property type="term" value="P:positive regulation of peptidyl-serine phosphorylation"/>
    <property type="evidence" value="ECO:0000315"/>
    <property type="project" value="UniProtKB"/>
</dbReference>
<dbReference type="GO" id="GO:0050821">
    <property type="term" value="P:protein stabilization"/>
    <property type="evidence" value="ECO:0000315"/>
    <property type="project" value="UniProtKB"/>
</dbReference>
<dbReference type="CDD" id="cd14709">
    <property type="entry name" value="bZIP_CREBL2"/>
    <property type="match status" value="1"/>
</dbReference>
<dbReference type="FunFam" id="1.20.5.170:FF:000044">
    <property type="entry name" value="cAMP-responsive element-binding protein-like 2 isoform X2"/>
    <property type="match status" value="1"/>
</dbReference>
<dbReference type="Gene3D" id="1.20.5.170">
    <property type="match status" value="1"/>
</dbReference>
<dbReference type="InterPro" id="IPR004827">
    <property type="entry name" value="bZIP"/>
</dbReference>
<dbReference type="InterPro" id="IPR046347">
    <property type="entry name" value="bZIP_sf"/>
</dbReference>
<dbReference type="InterPro" id="IPR039250">
    <property type="entry name" value="CREBL2/REPTOR-BP"/>
</dbReference>
<dbReference type="PANTHER" id="PTHR21051">
    <property type="entry name" value="CAMP-RESPONSIVE ELEMENT-BINDING PROTEIN-LIKE 2"/>
    <property type="match status" value="1"/>
</dbReference>
<dbReference type="PANTHER" id="PTHR21051:SF4">
    <property type="entry name" value="CAMP-RESPONSIVE ELEMENT-BINDING PROTEIN-LIKE 2"/>
    <property type="match status" value="1"/>
</dbReference>
<dbReference type="Pfam" id="PF07716">
    <property type="entry name" value="bZIP_2"/>
    <property type="match status" value="1"/>
</dbReference>
<dbReference type="SUPFAM" id="SSF57959">
    <property type="entry name" value="Leucine zipper domain"/>
    <property type="match status" value="1"/>
</dbReference>
<name>CRBL2_MOUSE</name>
<proteinExistence type="evidence at protein level"/>
<accession>Q32M00</accession>
<accession>Q8BR67</accession>
<reference key="1">
    <citation type="journal article" date="2005" name="Science">
        <title>The transcriptional landscape of the mammalian genome.</title>
        <authorList>
            <person name="Carninci P."/>
            <person name="Kasukawa T."/>
            <person name="Katayama S."/>
            <person name="Gough J."/>
            <person name="Frith M.C."/>
            <person name="Maeda N."/>
            <person name="Oyama R."/>
            <person name="Ravasi T."/>
            <person name="Lenhard B."/>
            <person name="Wells C."/>
            <person name="Kodzius R."/>
            <person name="Shimokawa K."/>
            <person name="Bajic V.B."/>
            <person name="Brenner S.E."/>
            <person name="Batalov S."/>
            <person name="Forrest A.R."/>
            <person name="Zavolan M."/>
            <person name="Davis M.J."/>
            <person name="Wilming L.G."/>
            <person name="Aidinis V."/>
            <person name="Allen J.E."/>
            <person name="Ambesi-Impiombato A."/>
            <person name="Apweiler R."/>
            <person name="Aturaliya R.N."/>
            <person name="Bailey T.L."/>
            <person name="Bansal M."/>
            <person name="Baxter L."/>
            <person name="Beisel K.W."/>
            <person name="Bersano T."/>
            <person name="Bono H."/>
            <person name="Chalk A.M."/>
            <person name="Chiu K.P."/>
            <person name="Choudhary V."/>
            <person name="Christoffels A."/>
            <person name="Clutterbuck D.R."/>
            <person name="Crowe M.L."/>
            <person name="Dalla E."/>
            <person name="Dalrymple B.P."/>
            <person name="de Bono B."/>
            <person name="Della Gatta G."/>
            <person name="di Bernardo D."/>
            <person name="Down T."/>
            <person name="Engstrom P."/>
            <person name="Fagiolini M."/>
            <person name="Faulkner G."/>
            <person name="Fletcher C.F."/>
            <person name="Fukushima T."/>
            <person name="Furuno M."/>
            <person name="Futaki S."/>
            <person name="Gariboldi M."/>
            <person name="Georgii-Hemming P."/>
            <person name="Gingeras T.R."/>
            <person name="Gojobori T."/>
            <person name="Green R.E."/>
            <person name="Gustincich S."/>
            <person name="Harbers M."/>
            <person name="Hayashi Y."/>
            <person name="Hensch T.K."/>
            <person name="Hirokawa N."/>
            <person name="Hill D."/>
            <person name="Huminiecki L."/>
            <person name="Iacono M."/>
            <person name="Ikeo K."/>
            <person name="Iwama A."/>
            <person name="Ishikawa T."/>
            <person name="Jakt M."/>
            <person name="Kanapin A."/>
            <person name="Katoh M."/>
            <person name="Kawasawa Y."/>
            <person name="Kelso J."/>
            <person name="Kitamura H."/>
            <person name="Kitano H."/>
            <person name="Kollias G."/>
            <person name="Krishnan S.P."/>
            <person name="Kruger A."/>
            <person name="Kummerfeld S.K."/>
            <person name="Kurochkin I.V."/>
            <person name="Lareau L.F."/>
            <person name="Lazarevic D."/>
            <person name="Lipovich L."/>
            <person name="Liu J."/>
            <person name="Liuni S."/>
            <person name="McWilliam S."/>
            <person name="Madan Babu M."/>
            <person name="Madera M."/>
            <person name="Marchionni L."/>
            <person name="Matsuda H."/>
            <person name="Matsuzawa S."/>
            <person name="Miki H."/>
            <person name="Mignone F."/>
            <person name="Miyake S."/>
            <person name="Morris K."/>
            <person name="Mottagui-Tabar S."/>
            <person name="Mulder N."/>
            <person name="Nakano N."/>
            <person name="Nakauchi H."/>
            <person name="Ng P."/>
            <person name="Nilsson R."/>
            <person name="Nishiguchi S."/>
            <person name="Nishikawa S."/>
            <person name="Nori F."/>
            <person name="Ohara O."/>
            <person name="Okazaki Y."/>
            <person name="Orlando V."/>
            <person name="Pang K.C."/>
            <person name="Pavan W.J."/>
            <person name="Pavesi G."/>
            <person name="Pesole G."/>
            <person name="Petrovsky N."/>
            <person name="Piazza S."/>
            <person name="Reed J."/>
            <person name="Reid J.F."/>
            <person name="Ring B.Z."/>
            <person name="Ringwald M."/>
            <person name="Rost B."/>
            <person name="Ruan Y."/>
            <person name="Salzberg S.L."/>
            <person name="Sandelin A."/>
            <person name="Schneider C."/>
            <person name="Schoenbach C."/>
            <person name="Sekiguchi K."/>
            <person name="Semple C.A."/>
            <person name="Seno S."/>
            <person name="Sessa L."/>
            <person name="Sheng Y."/>
            <person name="Shibata Y."/>
            <person name="Shimada H."/>
            <person name="Shimada K."/>
            <person name="Silva D."/>
            <person name="Sinclair B."/>
            <person name="Sperling S."/>
            <person name="Stupka E."/>
            <person name="Sugiura K."/>
            <person name="Sultana R."/>
            <person name="Takenaka Y."/>
            <person name="Taki K."/>
            <person name="Tammoja K."/>
            <person name="Tan S.L."/>
            <person name="Tang S."/>
            <person name="Taylor M.S."/>
            <person name="Tegner J."/>
            <person name="Teichmann S.A."/>
            <person name="Ueda H.R."/>
            <person name="van Nimwegen E."/>
            <person name="Verardo R."/>
            <person name="Wei C.L."/>
            <person name="Yagi K."/>
            <person name="Yamanishi H."/>
            <person name="Zabarovsky E."/>
            <person name="Zhu S."/>
            <person name="Zimmer A."/>
            <person name="Hide W."/>
            <person name="Bult C."/>
            <person name="Grimmond S.M."/>
            <person name="Teasdale R.D."/>
            <person name="Liu E.T."/>
            <person name="Brusic V."/>
            <person name="Quackenbush J."/>
            <person name="Wahlestedt C."/>
            <person name="Mattick J.S."/>
            <person name="Hume D.A."/>
            <person name="Kai C."/>
            <person name="Sasaki D."/>
            <person name="Tomaru Y."/>
            <person name="Fukuda S."/>
            <person name="Kanamori-Katayama M."/>
            <person name="Suzuki M."/>
            <person name="Aoki J."/>
            <person name="Arakawa T."/>
            <person name="Iida J."/>
            <person name="Imamura K."/>
            <person name="Itoh M."/>
            <person name="Kato T."/>
            <person name="Kawaji H."/>
            <person name="Kawagashira N."/>
            <person name="Kawashima T."/>
            <person name="Kojima M."/>
            <person name="Kondo S."/>
            <person name="Konno H."/>
            <person name="Nakano K."/>
            <person name="Ninomiya N."/>
            <person name="Nishio T."/>
            <person name="Okada M."/>
            <person name="Plessy C."/>
            <person name="Shibata K."/>
            <person name="Shiraki T."/>
            <person name="Suzuki S."/>
            <person name="Tagami M."/>
            <person name="Waki K."/>
            <person name="Watahiki A."/>
            <person name="Okamura-Oho Y."/>
            <person name="Suzuki H."/>
            <person name="Kawai J."/>
            <person name="Hayashizaki Y."/>
        </authorList>
    </citation>
    <scope>NUCLEOTIDE SEQUENCE [LARGE SCALE MRNA]</scope>
    <source>
        <strain>C57BL/6J</strain>
        <tissue>Corpora quadrigemina</tissue>
    </source>
</reference>
<reference key="2">
    <citation type="journal article" date="2004" name="Genome Res.">
        <title>The status, quality, and expansion of the NIH full-length cDNA project: the Mammalian Gene Collection (MGC).</title>
        <authorList>
            <consortium name="The MGC Project Team"/>
        </authorList>
    </citation>
    <scope>NUCLEOTIDE SEQUENCE [LARGE SCALE MRNA]</scope>
</reference>
<reference key="3">
    <citation type="journal article" date="2011" name="Biochem. J.">
        <title>CREBL2, interacting with CREB, induces adipogenesis in 3T3-L1 adipocytes.</title>
        <authorList>
            <person name="Ma X."/>
            <person name="Zhang H."/>
            <person name="Yuan L."/>
            <person name="Jing H."/>
            <person name="Thacker P."/>
            <person name="Li D."/>
        </authorList>
    </citation>
    <scope>FUNCTION IN ADIPOCYTE DIFFERENTIATION</scope>
    <scope>INTERACTION WITH CREB1</scope>
    <scope>SUBCELLULAR LOCATION</scope>
    <scope>TISSUE SPECIFICITY</scope>
    <scope>INDUCTION</scope>
</reference>
<comment type="function">
    <text evidence="3">Probable regulator of CREB1 transcriptional activity which is involved in adipose cells differentiation. May also play a regulatory role in the cell cycle.</text>
</comment>
<comment type="subunit">
    <text evidence="3">Interacts with CREB1; regulates CREB1 phosphorylation, stability and transcriptional activity.</text>
</comment>
<comment type="interaction">
    <interactant intactId="EBI-5314489">
        <id>Q32M00</id>
    </interactant>
    <interactant intactId="EBI-2291098">
        <id>Q01147</id>
        <label>Creb1</label>
    </interactant>
    <organismsDiffer>false</organismsDiffer>
    <experiments>4</experiments>
</comment>
<comment type="subcellular location">
    <subcellularLocation>
        <location evidence="3">Nucleus</location>
    </subcellularLocation>
</comment>
<comment type="tissue specificity">
    <text evidence="3">Widely expressed with higher expression in adipose tissue, skeletal muscle, and liver (at protein level).</text>
</comment>
<comment type="induction">
    <text evidence="3">Up-regulated during preadipocyte differentiation (at protein level).</text>
</comment>
<comment type="PTM">
    <text evidence="1">Phosphorylated by AMPK.</text>
</comment>
<comment type="similarity">
    <text evidence="4">Belongs to the bZIP family. ATF subfamily.</text>
</comment>
<sequence length="123" mass="14002">MDDSKVVGGKVKKPGKRGRKPAKIDLKAKLERSRQSARECRARKKLRYQYLEELVSSRERAICALREELEMYKQWCMAMDQGKIPSEIRALLTGEEQSKPQQNSSRHPKAGKTDANTNSLVGN</sequence>
<organism>
    <name type="scientific">Mus musculus</name>
    <name type="common">Mouse</name>
    <dbReference type="NCBI Taxonomy" id="10090"/>
    <lineage>
        <taxon>Eukaryota</taxon>
        <taxon>Metazoa</taxon>
        <taxon>Chordata</taxon>
        <taxon>Craniata</taxon>
        <taxon>Vertebrata</taxon>
        <taxon>Euteleostomi</taxon>
        <taxon>Mammalia</taxon>
        <taxon>Eutheria</taxon>
        <taxon>Euarchontoglires</taxon>
        <taxon>Glires</taxon>
        <taxon>Rodentia</taxon>
        <taxon>Myomorpha</taxon>
        <taxon>Muroidea</taxon>
        <taxon>Muridae</taxon>
        <taxon>Murinae</taxon>
        <taxon>Mus</taxon>
        <taxon>Mus</taxon>
    </lineage>
</organism>
<gene>
    <name type="primary">Crebl2</name>
</gene>
<protein>
    <recommendedName>
        <fullName>cAMP-responsive element-binding protein-like 2</fullName>
    </recommendedName>
</protein>